<keyword id="KW-0880">Kelch repeat</keyword>
<keyword id="KW-1185">Reference proteome</keyword>
<keyword id="KW-0677">Repeat</keyword>
<dbReference type="EMBL" id="AP002034">
    <property type="protein sequence ID" value="BAB02248.1"/>
    <property type="molecule type" value="Genomic_DNA"/>
</dbReference>
<dbReference type="EMBL" id="CP002686">
    <property type="protein sequence ID" value="AEE76414.1"/>
    <property type="molecule type" value="Genomic_DNA"/>
</dbReference>
<dbReference type="RefSeq" id="NP_188707.1">
    <property type="nucleotide sequence ID" value="NM_112962.2"/>
</dbReference>
<dbReference type="SMR" id="Q9LHQ0"/>
<dbReference type="FunCoup" id="Q9LHQ0">
    <property type="interactions" value="2"/>
</dbReference>
<dbReference type="PaxDb" id="3702-AT3G20710.1"/>
<dbReference type="EnsemblPlants" id="AT3G20710.1">
    <property type="protein sequence ID" value="AT3G20710.1"/>
    <property type="gene ID" value="AT3G20710"/>
</dbReference>
<dbReference type="GeneID" id="821619"/>
<dbReference type="Gramene" id="AT3G20710.1">
    <property type="protein sequence ID" value="AT3G20710.1"/>
    <property type="gene ID" value="AT3G20710"/>
</dbReference>
<dbReference type="KEGG" id="ath:AT3G20710"/>
<dbReference type="Araport" id="AT3G20710"/>
<dbReference type="TAIR" id="AT3G20710"/>
<dbReference type="HOGENOM" id="CLU_034692_0_0_1"/>
<dbReference type="InParanoid" id="Q9LHQ0"/>
<dbReference type="OMA" id="IMPRPPF"/>
<dbReference type="PhylomeDB" id="Q9LHQ0"/>
<dbReference type="PRO" id="PR:Q9LHQ0"/>
<dbReference type="Proteomes" id="UP000006548">
    <property type="component" value="Chromosome 3"/>
</dbReference>
<dbReference type="ExpressionAtlas" id="Q9LHQ0">
    <property type="expression patterns" value="baseline and differential"/>
</dbReference>
<dbReference type="CDD" id="cd22157">
    <property type="entry name" value="F-box_AtFBW1-like"/>
    <property type="match status" value="1"/>
</dbReference>
<dbReference type="Gene3D" id="1.20.1280.50">
    <property type="match status" value="1"/>
</dbReference>
<dbReference type="InterPro" id="IPR006527">
    <property type="entry name" value="F-box-assoc_dom_typ1"/>
</dbReference>
<dbReference type="InterPro" id="IPR017451">
    <property type="entry name" value="F-box-assoc_interact_dom"/>
</dbReference>
<dbReference type="InterPro" id="IPR036047">
    <property type="entry name" value="F-box-like_dom_sf"/>
</dbReference>
<dbReference type="InterPro" id="IPR001810">
    <property type="entry name" value="F-box_dom"/>
</dbReference>
<dbReference type="InterPro" id="IPR050796">
    <property type="entry name" value="SCF_F-box_component"/>
</dbReference>
<dbReference type="NCBIfam" id="TIGR01640">
    <property type="entry name" value="F_box_assoc_1"/>
    <property type="match status" value="1"/>
</dbReference>
<dbReference type="PANTHER" id="PTHR31672">
    <property type="entry name" value="BNACNNG10540D PROTEIN"/>
    <property type="match status" value="1"/>
</dbReference>
<dbReference type="PANTHER" id="PTHR31672:SF13">
    <property type="entry name" value="F-BOX PROTEIN CPR30-LIKE"/>
    <property type="match status" value="1"/>
</dbReference>
<dbReference type="Pfam" id="PF00646">
    <property type="entry name" value="F-box"/>
    <property type="match status" value="1"/>
</dbReference>
<dbReference type="Pfam" id="PF07734">
    <property type="entry name" value="FBA_1"/>
    <property type="match status" value="1"/>
</dbReference>
<dbReference type="SMART" id="SM00256">
    <property type="entry name" value="FBOX"/>
    <property type="match status" value="1"/>
</dbReference>
<dbReference type="SUPFAM" id="SSF81383">
    <property type="entry name" value="F-box domain"/>
    <property type="match status" value="1"/>
</dbReference>
<dbReference type="PROSITE" id="PS50181">
    <property type="entry name" value="FBOX"/>
    <property type="match status" value="1"/>
</dbReference>
<name>FBK64_ARATH</name>
<organism>
    <name type="scientific">Arabidopsis thaliana</name>
    <name type="common">Mouse-ear cress</name>
    <dbReference type="NCBI Taxonomy" id="3702"/>
    <lineage>
        <taxon>Eukaryota</taxon>
        <taxon>Viridiplantae</taxon>
        <taxon>Streptophyta</taxon>
        <taxon>Embryophyta</taxon>
        <taxon>Tracheophyta</taxon>
        <taxon>Spermatophyta</taxon>
        <taxon>Magnoliopsida</taxon>
        <taxon>eudicotyledons</taxon>
        <taxon>Gunneridae</taxon>
        <taxon>Pentapetalae</taxon>
        <taxon>rosids</taxon>
        <taxon>malvids</taxon>
        <taxon>Brassicales</taxon>
        <taxon>Brassicaceae</taxon>
        <taxon>Camelineae</taxon>
        <taxon>Arabidopsis</taxon>
    </lineage>
</organism>
<feature type="chain" id="PRO_0000283224" description="Putative F-box/kelch-repeat protein At3g20710">
    <location>
        <begin position="1"/>
        <end position="362"/>
    </location>
</feature>
<feature type="domain" description="F-box" evidence="1">
    <location>
        <begin position="1"/>
        <end position="50"/>
    </location>
</feature>
<feature type="repeat" description="Kelch 1">
    <location>
        <begin position="150"/>
        <end position="201"/>
    </location>
</feature>
<feature type="repeat" description="Kelch 2">
    <location>
        <begin position="293"/>
        <end position="341"/>
    </location>
</feature>
<reference key="1">
    <citation type="journal article" date="2000" name="DNA Res.">
        <title>Structural analysis of Arabidopsis thaliana chromosome 3. II. Sequence features of the 4,251,695 bp regions covered by 90 P1, TAC and BAC clones.</title>
        <authorList>
            <person name="Kaneko T."/>
            <person name="Katoh T."/>
            <person name="Sato S."/>
            <person name="Nakamura Y."/>
            <person name="Asamizu E."/>
            <person name="Tabata S."/>
        </authorList>
    </citation>
    <scope>NUCLEOTIDE SEQUENCE [LARGE SCALE GENOMIC DNA]</scope>
    <source>
        <strain>cv. Columbia</strain>
    </source>
</reference>
<reference key="2">
    <citation type="journal article" date="2017" name="Plant J.">
        <title>Araport11: a complete reannotation of the Arabidopsis thaliana reference genome.</title>
        <authorList>
            <person name="Cheng C.Y."/>
            <person name="Krishnakumar V."/>
            <person name="Chan A.P."/>
            <person name="Thibaud-Nissen F."/>
            <person name="Schobel S."/>
            <person name="Town C.D."/>
        </authorList>
    </citation>
    <scope>GENOME REANNOTATION</scope>
    <source>
        <strain>cv. Columbia</strain>
    </source>
</reference>
<proteinExistence type="predicted"/>
<accession>Q9LHQ0</accession>
<sequence length="362" mass="42140">MMMSNLPKDLVEEILSRVPFKYLRAIRSTCKNWYDLSKNRSFANKNIDKAAVSGEKEFLMITQFNVFWVGVNLHRSQNNSFDLSIQLKAKIVSRDKKDDLFQKSQVIHCNGVFLCVREKMLVVLNPYWGQTKRIMPRPPFGCFDRYALGYDKSSGSHKILRLFGVNQNNLNIYDLSSSSWMIPDGTLERDMEYMKQGVSLNGDTYWYAKDKESIDWYLLCFDFTRERFGTPLPLPFSNEGYTLHKGYKSLSALKEEKLAVLLWDTMVIWVTNKIEPDAVSWSIFLKLDMEPSIYCRYGNFFIDEEKKVAVVFEKDSSSWSWMYNPNYNKAYIAGENGYFKSVNLLKSPNTLQLGHLVCSYAL</sequence>
<protein>
    <recommendedName>
        <fullName>Putative F-box/kelch-repeat protein At3g20710</fullName>
    </recommendedName>
</protein>
<gene>
    <name type="ordered locus">At3g20710</name>
    <name type="ORF">F3H11.11</name>
</gene>
<evidence type="ECO:0000255" key="1">
    <source>
        <dbReference type="PROSITE-ProRule" id="PRU00080"/>
    </source>
</evidence>